<feature type="chain" id="PRO_1000057376" description="Ribonuclease HII">
    <location>
        <begin position="1"/>
        <end position="198"/>
    </location>
</feature>
<feature type="domain" description="RNase H type-2" evidence="2">
    <location>
        <begin position="10"/>
        <end position="198"/>
    </location>
</feature>
<feature type="binding site" evidence="1">
    <location>
        <position position="16"/>
    </location>
    <ligand>
        <name>a divalent metal cation</name>
        <dbReference type="ChEBI" id="CHEBI:60240"/>
    </ligand>
</feature>
<feature type="binding site" evidence="1">
    <location>
        <position position="17"/>
    </location>
    <ligand>
        <name>a divalent metal cation</name>
        <dbReference type="ChEBI" id="CHEBI:60240"/>
    </ligand>
</feature>
<feature type="binding site" evidence="1">
    <location>
        <position position="108"/>
    </location>
    <ligand>
        <name>a divalent metal cation</name>
        <dbReference type="ChEBI" id="CHEBI:60240"/>
    </ligand>
</feature>
<gene>
    <name evidence="1" type="primary">rnhB</name>
    <name type="ordered locus">EcE24377A_0187</name>
</gene>
<evidence type="ECO:0000255" key="1">
    <source>
        <dbReference type="HAMAP-Rule" id="MF_00052"/>
    </source>
</evidence>
<evidence type="ECO:0000255" key="2">
    <source>
        <dbReference type="PROSITE-ProRule" id="PRU01319"/>
    </source>
</evidence>
<sequence length="198" mass="21526">MIEFVYPHTQLVAGVDEVGRGPLVGAVVTAAVILDPARPIAGLNDSKKLSEKRRLALYEEIKEKALSWSLGRAEPHEIDELNILHATMLAMQRAVAGLHIAPEYVLIDGNRCPKLPMPAMAVVKGDSRVPEISAASILAKVTRDAEMAALDIVFPQYGFAQHKGYPTAFHLEKLAEHGATEHHRRSFGPVKRALGLAS</sequence>
<accession>A7ZHS3</accession>
<keyword id="KW-0963">Cytoplasm</keyword>
<keyword id="KW-0255">Endonuclease</keyword>
<keyword id="KW-0378">Hydrolase</keyword>
<keyword id="KW-0464">Manganese</keyword>
<keyword id="KW-0479">Metal-binding</keyword>
<keyword id="KW-0540">Nuclease</keyword>
<keyword id="KW-1185">Reference proteome</keyword>
<proteinExistence type="inferred from homology"/>
<organism>
    <name type="scientific">Escherichia coli O139:H28 (strain E24377A / ETEC)</name>
    <dbReference type="NCBI Taxonomy" id="331111"/>
    <lineage>
        <taxon>Bacteria</taxon>
        <taxon>Pseudomonadati</taxon>
        <taxon>Pseudomonadota</taxon>
        <taxon>Gammaproteobacteria</taxon>
        <taxon>Enterobacterales</taxon>
        <taxon>Enterobacteriaceae</taxon>
        <taxon>Escherichia</taxon>
    </lineage>
</organism>
<name>RNH2_ECO24</name>
<comment type="function">
    <text evidence="1">Endonuclease that specifically degrades the RNA of RNA-DNA hybrids.</text>
</comment>
<comment type="catalytic activity">
    <reaction evidence="1">
        <text>Endonucleolytic cleavage to 5'-phosphomonoester.</text>
        <dbReference type="EC" id="3.1.26.4"/>
    </reaction>
</comment>
<comment type="cofactor">
    <cofactor evidence="1">
        <name>Mn(2+)</name>
        <dbReference type="ChEBI" id="CHEBI:29035"/>
    </cofactor>
    <cofactor evidence="1">
        <name>Mg(2+)</name>
        <dbReference type="ChEBI" id="CHEBI:18420"/>
    </cofactor>
    <text evidence="1">Manganese or magnesium. Binds 1 divalent metal ion per monomer in the absence of substrate. May bind a second metal ion after substrate binding.</text>
</comment>
<comment type="subcellular location">
    <subcellularLocation>
        <location evidence="1">Cytoplasm</location>
    </subcellularLocation>
</comment>
<comment type="similarity">
    <text evidence="1">Belongs to the RNase HII family.</text>
</comment>
<protein>
    <recommendedName>
        <fullName evidence="1">Ribonuclease HII</fullName>
        <shortName evidence="1">RNase HII</shortName>
        <ecNumber evidence="1">3.1.26.4</ecNumber>
    </recommendedName>
</protein>
<reference key="1">
    <citation type="journal article" date="2008" name="J. Bacteriol.">
        <title>The pangenome structure of Escherichia coli: comparative genomic analysis of E. coli commensal and pathogenic isolates.</title>
        <authorList>
            <person name="Rasko D.A."/>
            <person name="Rosovitz M.J."/>
            <person name="Myers G.S.A."/>
            <person name="Mongodin E.F."/>
            <person name="Fricke W.F."/>
            <person name="Gajer P."/>
            <person name="Crabtree J."/>
            <person name="Sebaihia M."/>
            <person name="Thomson N.R."/>
            <person name="Chaudhuri R."/>
            <person name="Henderson I.R."/>
            <person name="Sperandio V."/>
            <person name="Ravel J."/>
        </authorList>
    </citation>
    <scope>NUCLEOTIDE SEQUENCE [LARGE SCALE GENOMIC DNA]</scope>
    <source>
        <strain>E24377A / ETEC</strain>
    </source>
</reference>
<dbReference type="EC" id="3.1.26.4" evidence="1"/>
<dbReference type="EMBL" id="CP000800">
    <property type="protein sequence ID" value="ABV19192.1"/>
    <property type="molecule type" value="Genomic_DNA"/>
</dbReference>
<dbReference type="RefSeq" id="WP_000569430.1">
    <property type="nucleotide sequence ID" value="NC_009801.1"/>
</dbReference>
<dbReference type="SMR" id="A7ZHS3"/>
<dbReference type="GeneID" id="93777242"/>
<dbReference type="KEGG" id="ecw:EcE24377A_0187"/>
<dbReference type="HOGENOM" id="CLU_036532_3_2_6"/>
<dbReference type="Proteomes" id="UP000001122">
    <property type="component" value="Chromosome"/>
</dbReference>
<dbReference type="GO" id="GO:0005737">
    <property type="term" value="C:cytoplasm"/>
    <property type="evidence" value="ECO:0007669"/>
    <property type="project" value="UniProtKB-SubCell"/>
</dbReference>
<dbReference type="GO" id="GO:0032299">
    <property type="term" value="C:ribonuclease H2 complex"/>
    <property type="evidence" value="ECO:0007669"/>
    <property type="project" value="TreeGrafter"/>
</dbReference>
<dbReference type="GO" id="GO:0030145">
    <property type="term" value="F:manganese ion binding"/>
    <property type="evidence" value="ECO:0007669"/>
    <property type="project" value="UniProtKB-UniRule"/>
</dbReference>
<dbReference type="GO" id="GO:0003723">
    <property type="term" value="F:RNA binding"/>
    <property type="evidence" value="ECO:0007669"/>
    <property type="project" value="InterPro"/>
</dbReference>
<dbReference type="GO" id="GO:0004523">
    <property type="term" value="F:RNA-DNA hybrid ribonuclease activity"/>
    <property type="evidence" value="ECO:0007669"/>
    <property type="project" value="UniProtKB-UniRule"/>
</dbReference>
<dbReference type="GO" id="GO:0043137">
    <property type="term" value="P:DNA replication, removal of RNA primer"/>
    <property type="evidence" value="ECO:0007669"/>
    <property type="project" value="TreeGrafter"/>
</dbReference>
<dbReference type="GO" id="GO:0006298">
    <property type="term" value="P:mismatch repair"/>
    <property type="evidence" value="ECO:0007669"/>
    <property type="project" value="TreeGrafter"/>
</dbReference>
<dbReference type="CDD" id="cd07182">
    <property type="entry name" value="RNase_HII_bacteria_HII_like"/>
    <property type="match status" value="1"/>
</dbReference>
<dbReference type="FunFam" id="3.30.420.10:FF:000006">
    <property type="entry name" value="Ribonuclease HII"/>
    <property type="match status" value="1"/>
</dbReference>
<dbReference type="Gene3D" id="3.30.420.10">
    <property type="entry name" value="Ribonuclease H-like superfamily/Ribonuclease H"/>
    <property type="match status" value="1"/>
</dbReference>
<dbReference type="HAMAP" id="MF_00052_B">
    <property type="entry name" value="RNase_HII_B"/>
    <property type="match status" value="1"/>
</dbReference>
<dbReference type="InterPro" id="IPR022898">
    <property type="entry name" value="RNase_HII"/>
</dbReference>
<dbReference type="InterPro" id="IPR001352">
    <property type="entry name" value="RNase_HII/HIII"/>
</dbReference>
<dbReference type="InterPro" id="IPR024567">
    <property type="entry name" value="RNase_HII/HIII_dom"/>
</dbReference>
<dbReference type="InterPro" id="IPR012337">
    <property type="entry name" value="RNaseH-like_sf"/>
</dbReference>
<dbReference type="InterPro" id="IPR036397">
    <property type="entry name" value="RNaseH_sf"/>
</dbReference>
<dbReference type="NCBIfam" id="NF000594">
    <property type="entry name" value="PRK00015.1-1"/>
    <property type="match status" value="1"/>
</dbReference>
<dbReference type="NCBIfam" id="NF000595">
    <property type="entry name" value="PRK00015.1-3"/>
    <property type="match status" value="1"/>
</dbReference>
<dbReference type="NCBIfam" id="NF000596">
    <property type="entry name" value="PRK00015.1-4"/>
    <property type="match status" value="1"/>
</dbReference>
<dbReference type="PANTHER" id="PTHR10954">
    <property type="entry name" value="RIBONUCLEASE H2 SUBUNIT A"/>
    <property type="match status" value="1"/>
</dbReference>
<dbReference type="PANTHER" id="PTHR10954:SF18">
    <property type="entry name" value="RIBONUCLEASE HII"/>
    <property type="match status" value="1"/>
</dbReference>
<dbReference type="Pfam" id="PF01351">
    <property type="entry name" value="RNase_HII"/>
    <property type="match status" value="1"/>
</dbReference>
<dbReference type="SUPFAM" id="SSF53098">
    <property type="entry name" value="Ribonuclease H-like"/>
    <property type="match status" value="1"/>
</dbReference>
<dbReference type="PROSITE" id="PS51975">
    <property type="entry name" value="RNASE_H_2"/>
    <property type="match status" value="1"/>
</dbReference>